<dbReference type="EC" id="7.1.1.-"/>
<dbReference type="EMBL" id="DQ345959">
    <property type="protein sequence ID" value="ABC73685.1"/>
    <property type="molecule type" value="Genomic_DNA"/>
</dbReference>
<dbReference type="RefSeq" id="YP_538993.1">
    <property type="nucleotide sequence ID" value="NC_007944.1"/>
</dbReference>
<dbReference type="SMR" id="Q2L960"/>
<dbReference type="GeneID" id="3989245"/>
<dbReference type="KEGG" id="ghi:3989245"/>
<dbReference type="OrthoDB" id="58648at41938"/>
<dbReference type="Proteomes" id="UP000189702">
    <property type="component" value="Chloroplast Pltd"/>
</dbReference>
<dbReference type="GO" id="GO:0009535">
    <property type="term" value="C:chloroplast thylakoid membrane"/>
    <property type="evidence" value="ECO:0007669"/>
    <property type="project" value="UniProtKB-SubCell"/>
</dbReference>
<dbReference type="GO" id="GO:0008137">
    <property type="term" value="F:NADH dehydrogenase (ubiquinone) activity"/>
    <property type="evidence" value="ECO:0007669"/>
    <property type="project" value="InterPro"/>
</dbReference>
<dbReference type="GO" id="GO:0048038">
    <property type="term" value="F:quinone binding"/>
    <property type="evidence" value="ECO:0007669"/>
    <property type="project" value="UniProtKB-KW"/>
</dbReference>
<dbReference type="GO" id="GO:0042773">
    <property type="term" value="P:ATP synthesis coupled electron transport"/>
    <property type="evidence" value="ECO:0007669"/>
    <property type="project" value="InterPro"/>
</dbReference>
<dbReference type="GO" id="GO:0015990">
    <property type="term" value="P:electron transport coupled proton transport"/>
    <property type="evidence" value="ECO:0000318"/>
    <property type="project" value="GO_Central"/>
</dbReference>
<dbReference type="Gene3D" id="1.20.5.2700">
    <property type="match status" value="1"/>
</dbReference>
<dbReference type="InterPro" id="IPR002128">
    <property type="entry name" value="NADH_UbQ_OxRdtase_chlpt_su5_C"/>
</dbReference>
<dbReference type="InterPro" id="IPR018393">
    <property type="entry name" value="NADHpl_OxRdtase_5_subgr"/>
</dbReference>
<dbReference type="InterPro" id="IPR001750">
    <property type="entry name" value="ND/Mrp_TM"/>
</dbReference>
<dbReference type="InterPro" id="IPR003945">
    <property type="entry name" value="NU5C-like"/>
</dbReference>
<dbReference type="InterPro" id="IPR001516">
    <property type="entry name" value="Proton_antipo_N"/>
</dbReference>
<dbReference type="NCBIfam" id="TIGR01974">
    <property type="entry name" value="NDH_I_L"/>
    <property type="match status" value="1"/>
</dbReference>
<dbReference type="NCBIfam" id="NF005141">
    <property type="entry name" value="PRK06590.1"/>
    <property type="match status" value="1"/>
</dbReference>
<dbReference type="PANTHER" id="PTHR42829">
    <property type="entry name" value="NADH-UBIQUINONE OXIDOREDUCTASE CHAIN 5"/>
    <property type="match status" value="1"/>
</dbReference>
<dbReference type="PANTHER" id="PTHR42829:SF2">
    <property type="entry name" value="NADH-UBIQUINONE OXIDOREDUCTASE CHAIN 5"/>
    <property type="match status" value="1"/>
</dbReference>
<dbReference type="Pfam" id="PF01010">
    <property type="entry name" value="Proton_antipo_C"/>
    <property type="match status" value="1"/>
</dbReference>
<dbReference type="Pfam" id="PF00361">
    <property type="entry name" value="Proton_antipo_M"/>
    <property type="match status" value="1"/>
</dbReference>
<dbReference type="Pfam" id="PF00662">
    <property type="entry name" value="Proton_antipo_N"/>
    <property type="match status" value="1"/>
</dbReference>
<dbReference type="PRINTS" id="PR01434">
    <property type="entry name" value="NADHDHGNASE5"/>
</dbReference>
<dbReference type="PRINTS" id="PR01435">
    <property type="entry name" value="NPOXDRDTASE5"/>
</dbReference>
<geneLocation type="chloroplast"/>
<evidence type="ECO:0000250" key="1"/>
<evidence type="ECO:0000255" key="2"/>
<evidence type="ECO:0000305" key="3"/>
<comment type="function">
    <text evidence="1">NDH shuttles electrons from NAD(P)H:plastoquinone, via FMN and iron-sulfur (Fe-S) centers, to quinones in the photosynthetic chain and possibly in a chloroplast respiratory chain. The immediate electron acceptor for the enzyme in this species is believed to be plastoquinone. Couples the redox reaction to proton translocation, and thus conserves the redox energy in a proton gradient (By similarity).</text>
</comment>
<comment type="catalytic activity">
    <reaction>
        <text>a plastoquinone + NADH + (n+1) H(+)(in) = a plastoquinol + NAD(+) + n H(+)(out)</text>
        <dbReference type="Rhea" id="RHEA:42608"/>
        <dbReference type="Rhea" id="RHEA-COMP:9561"/>
        <dbReference type="Rhea" id="RHEA-COMP:9562"/>
        <dbReference type="ChEBI" id="CHEBI:15378"/>
        <dbReference type="ChEBI" id="CHEBI:17757"/>
        <dbReference type="ChEBI" id="CHEBI:57540"/>
        <dbReference type="ChEBI" id="CHEBI:57945"/>
        <dbReference type="ChEBI" id="CHEBI:62192"/>
    </reaction>
</comment>
<comment type="catalytic activity">
    <reaction>
        <text>a plastoquinone + NADPH + (n+1) H(+)(in) = a plastoquinol + NADP(+) + n H(+)(out)</text>
        <dbReference type="Rhea" id="RHEA:42612"/>
        <dbReference type="Rhea" id="RHEA-COMP:9561"/>
        <dbReference type="Rhea" id="RHEA-COMP:9562"/>
        <dbReference type="ChEBI" id="CHEBI:15378"/>
        <dbReference type="ChEBI" id="CHEBI:17757"/>
        <dbReference type="ChEBI" id="CHEBI:57783"/>
        <dbReference type="ChEBI" id="CHEBI:58349"/>
        <dbReference type="ChEBI" id="CHEBI:62192"/>
    </reaction>
</comment>
<comment type="subunit">
    <text evidence="1">NDH is composed of at least 16 different subunits, 5 of which are encoded in the nucleus.</text>
</comment>
<comment type="subcellular location">
    <subcellularLocation>
        <location evidence="1">Plastid</location>
        <location evidence="1">Chloroplast thylakoid membrane</location>
        <topology evidence="1">Multi-pass membrane protein</topology>
    </subcellularLocation>
</comment>
<comment type="similarity">
    <text evidence="3">Belongs to the complex I subunit 5 family.</text>
</comment>
<protein>
    <recommendedName>
        <fullName>NAD(P)H-quinone oxidoreductase subunit 5, chloroplastic</fullName>
        <ecNumber>7.1.1.-</ecNumber>
    </recommendedName>
    <alternativeName>
        <fullName>NAD(P)H dehydrogenase subunit 5</fullName>
    </alternativeName>
    <alternativeName>
        <fullName>NADH-plastoquinone oxidoreductase subunit 5</fullName>
    </alternativeName>
</protein>
<keyword id="KW-0150">Chloroplast</keyword>
<keyword id="KW-0472">Membrane</keyword>
<keyword id="KW-0520">NAD</keyword>
<keyword id="KW-0521">NADP</keyword>
<keyword id="KW-0934">Plastid</keyword>
<keyword id="KW-0618">Plastoquinone</keyword>
<keyword id="KW-0874">Quinone</keyword>
<keyword id="KW-1185">Reference proteome</keyword>
<keyword id="KW-0793">Thylakoid</keyword>
<keyword id="KW-1278">Translocase</keyword>
<keyword id="KW-0812">Transmembrane</keyword>
<keyword id="KW-1133">Transmembrane helix</keyword>
<keyword id="KW-0813">Transport</keyword>
<name>NU5C_GOSHI</name>
<feature type="chain" id="PRO_0000360937" description="NAD(P)H-quinone oxidoreductase subunit 5, chloroplastic">
    <location>
        <begin position="1"/>
        <end position="735"/>
    </location>
</feature>
<feature type="transmembrane region" description="Helical" evidence="2">
    <location>
        <begin position="9"/>
        <end position="29"/>
    </location>
</feature>
<feature type="transmembrane region" description="Helical" evidence="2">
    <location>
        <begin position="40"/>
        <end position="60"/>
    </location>
</feature>
<feature type="transmembrane region" description="Helical" evidence="2">
    <location>
        <begin position="89"/>
        <end position="109"/>
    </location>
</feature>
<feature type="transmembrane region" description="Helical" evidence="2">
    <location>
        <begin position="125"/>
        <end position="145"/>
    </location>
</feature>
<feature type="transmembrane region" description="Helical" evidence="2">
    <location>
        <begin position="147"/>
        <end position="167"/>
    </location>
</feature>
<feature type="transmembrane region" description="Helical" evidence="2">
    <location>
        <begin position="184"/>
        <end position="204"/>
    </location>
</feature>
<feature type="transmembrane region" description="Helical" evidence="2">
    <location>
        <begin position="219"/>
        <end position="239"/>
    </location>
</feature>
<feature type="transmembrane region" description="Helical" evidence="2">
    <location>
        <begin position="258"/>
        <end position="278"/>
    </location>
</feature>
<feature type="transmembrane region" description="Helical" evidence="2">
    <location>
        <begin position="280"/>
        <end position="300"/>
    </location>
</feature>
<feature type="transmembrane region" description="Helical" evidence="2">
    <location>
        <begin position="327"/>
        <end position="347"/>
    </location>
</feature>
<feature type="transmembrane region" description="Helical" evidence="2">
    <location>
        <begin position="354"/>
        <end position="374"/>
    </location>
</feature>
<feature type="transmembrane region" description="Helical" evidence="2">
    <location>
        <begin position="396"/>
        <end position="416"/>
    </location>
</feature>
<feature type="transmembrane region" description="Helical" evidence="2">
    <location>
        <begin position="425"/>
        <end position="445"/>
    </location>
</feature>
<feature type="transmembrane region" description="Helical" evidence="2">
    <location>
        <begin position="540"/>
        <end position="560"/>
    </location>
</feature>
<feature type="transmembrane region" description="Helical" evidence="2">
    <location>
        <begin position="600"/>
        <end position="620"/>
    </location>
</feature>
<feature type="transmembrane region" description="Helical" evidence="2">
    <location>
        <begin position="714"/>
        <end position="734"/>
    </location>
</feature>
<sequence>MEHADQYSWIIPFVPLPIPILIGMGLLLFPTATKNLRRMWAFPNILLLSIVMIFSLDLSIQQINGSSIYQYVWSWTINNDFSFEFGYFIDSLTSIMSILITTVGIFVLIYSDNYMSHDEGYLRFFAYMSLFNTSMLGLVTSCNLIQIYIFWELVGMCSYLLIGFWFTRPAAANACQKAFVTNRIGDFGLLLGILGFYWITGSFEFQDLFEIFNNLIYNNEVHFLFVTLCASLLFAGAVAKSAQFPLHVWLPDAMEGPTPISALIHAATMVAAGIFLVARLLPLFIVIPYIMNLISLIGIITVLLGATLALAQNDIKRGLAYSTMSQLGYMMLALGMGSYRAALFHLITHAYSKALLFLASGSIIHSMEAIVGYSPEKSQNMVFMGGLRKHVPVTQIAFLVGTLSLCGIPPLACFWSKDEILSDSWLYSPIFAIIAWSTAGLTAFYMFRIYLLTFEGHLNVHFQKYSGKKSSSFYSIKLWGKEEQKIINRNFRLFPLLTLTMNNNEQPYTIGGKKEARITITNFGYKKAFSYPHESDNTMLFPMLILLLFTLFVGAIAIPFNQEGMHLDILSKLLTPSINLLHQNSNDFEDSYQFFKNATFSVSIACFGIFTAFLLYKPFYSSVQNLNLLNSFVKRGPKRILLDKMIYLIYDWSYNRGYIDMFYSISLTKGIRGLAELTHFFDRRVIDGITNGVGITSFFVGESVKYLGGSRISFYLLLYLVYVFIFLVISYFILF</sequence>
<gene>
    <name type="primary">ndhF</name>
</gene>
<accession>Q2L960</accession>
<reference key="1">
    <citation type="journal article" date="2006" name="BMC Genomics">
        <title>The complete chloroplast genome sequence of Gossypium hirsutum: organization and phylogenetic relationships to other angiosperms.</title>
        <authorList>
            <person name="Lee S.-B."/>
            <person name="Kaittanis C."/>
            <person name="Jansen R.K."/>
            <person name="Hostetler J.B."/>
            <person name="Tallon L.J."/>
            <person name="Town C.D."/>
            <person name="Daniell H."/>
        </authorList>
    </citation>
    <scope>NUCLEOTIDE SEQUENCE [LARGE SCALE GENOMIC DNA]</scope>
    <source>
        <strain>cv. Coker 310FR</strain>
    </source>
</reference>
<organism>
    <name type="scientific">Gossypium hirsutum</name>
    <name type="common">Upland cotton</name>
    <name type="synonym">Gossypium mexicanum</name>
    <dbReference type="NCBI Taxonomy" id="3635"/>
    <lineage>
        <taxon>Eukaryota</taxon>
        <taxon>Viridiplantae</taxon>
        <taxon>Streptophyta</taxon>
        <taxon>Embryophyta</taxon>
        <taxon>Tracheophyta</taxon>
        <taxon>Spermatophyta</taxon>
        <taxon>Magnoliopsida</taxon>
        <taxon>eudicotyledons</taxon>
        <taxon>Gunneridae</taxon>
        <taxon>Pentapetalae</taxon>
        <taxon>rosids</taxon>
        <taxon>malvids</taxon>
        <taxon>Malvales</taxon>
        <taxon>Malvaceae</taxon>
        <taxon>Malvoideae</taxon>
        <taxon>Gossypium</taxon>
    </lineage>
</organism>
<proteinExistence type="inferred from homology"/>